<feature type="chain" id="PRO_0000169351" description="Cell division protein ZapA">
    <location>
        <begin position="1"/>
        <end position="109"/>
    </location>
</feature>
<feature type="coiled-coil region" evidence="1">
    <location>
        <begin position="21"/>
        <end position="99"/>
    </location>
</feature>
<organism>
    <name type="scientific">Escherichia coli O157:H7</name>
    <dbReference type="NCBI Taxonomy" id="83334"/>
    <lineage>
        <taxon>Bacteria</taxon>
        <taxon>Pseudomonadati</taxon>
        <taxon>Pseudomonadota</taxon>
        <taxon>Gammaproteobacteria</taxon>
        <taxon>Enterobacterales</taxon>
        <taxon>Enterobacteriaceae</taxon>
        <taxon>Escherichia</taxon>
    </lineage>
</organism>
<gene>
    <name evidence="1" type="primary">zapA</name>
    <name type="ordered locus">Z4247</name>
    <name type="ordered locus">ECs3781</name>
</gene>
<accession>P0ADS4</accession>
<accession>P45580</accession>
<name>ZAPA_ECO57</name>
<dbReference type="EMBL" id="AE005174">
    <property type="protein sequence ID" value="AAG58037.1"/>
    <property type="molecule type" value="Genomic_DNA"/>
</dbReference>
<dbReference type="EMBL" id="BA000007">
    <property type="protein sequence ID" value="BAB37204.1"/>
    <property type="molecule type" value="Genomic_DNA"/>
</dbReference>
<dbReference type="PIR" id="A85947">
    <property type="entry name" value="A85947"/>
</dbReference>
<dbReference type="PIR" id="E91101">
    <property type="entry name" value="E91101"/>
</dbReference>
<dbReference type="RefSeq" id="NP_311808.1">
    <property type="nucleotide sequence ID" value="NC_002695.1"/>
</dbReference>
<dbReference type="RefSeq" id="WP_001276008.1">
    <property type="nucleotide sequence ID" value="NZ_VOAI01000003.1"/>
</dbReference>
<dbReference type="SMR" id="P0ADS4"/>
<dbReference type="STRING" id="155864.Z4247"/>
<dbReference type="GeneID" id="916400"/>
<dbReference type="GeneID" id="93779091"/>
<dbReference type="KEGG" id="ece:Z4247"/>
<dbReference type="KEGG" id="ecs:ECs_3781"/>
<dbReference type="PATRIC" id="fig|386585.9.peg.3946"/>
<dbReference type="eggNOG" id="COG3027">
    <property type="taxonomic scope" value="Bacteria"/>
</dbReference>
<dbReference type="HOGENOM" id="CLU_116623_3_0_6"/>
<dbReference type="OMA" id="NICYELH"/>
<dbReference type="Proteomes" id="UP000000558">
    <property type="component" value="Chromosome"/>
</dbReference>
<dbReference type="Proteomes" id="UP000002519">
    <property type="component" value="Chromosome"/>
</dbReference>
<dbReference type="GO" id="GO:0032153">
    <property type="term" value="C:cell division site"/>
    <property type="evidence" value="ECO:0007669"/>
    <property type="project" value="TreeGrafter"/>
</dbReference>
<dbReference type="GO" id="GO:0030428">
    <property type="term" value="C:cell septum"/>
    <property type="evidence" value="ECO:0007669"/>
    <property type="project" value="TreeGrafter"/>
</dbReference>
<dbReference type="GO" id="GO:0005829">
    <property type="term" value="C:cytosol"/>
    <property type="evidence" value="ECO:0007669"/>
    <property type="project" value="TreeGrafter"/>
</dbReference>
<dbReference type="GO" id="GO:0005886">
    <property type="term" value="C:plasma membrane"/>
    <property type="evidence" value="ECO:0007669"/>
    <property type="project" value="UniProtKB-UniRule"/>
</dbReference>
<dbReference type="GO" id="GO:0000917">
    <property type="term" value="P:division septum assembly"/>
    <property type="evidence" value="ECO:0007669"/>
    <property type="project" value="UniProtKB-KW"/>
</dbReference>
<dbReference type="GO" id="GO:0043093">
    <property type="term" value="P:FtsZ-dependent cytokinesis"/>
    <property type="evidence" value="ECO:0007669"/>
    <property type="project" value="TreeGrafter"/>
</dbReference>
<dbReference type="GO" id="GO:0000921">
    <property type="term" value="P:septin ring assembly"/>
    <property type="evidence" value="ECO:0007669"/>
    <property type="project" value="TreeGrafter"/>
</dbReference>
<dbReference type="FunFam" id="1.20.5.50:FF:000001">
    <property type="entry name" value="Cell division protein ZapA"/>
    <property type="match status" value="1"/>
</dbReference>
<dbReference type="FunFam" id="3.30.160.880:FF:000001">
    <property type="entry name" value="Cell division protein ZapA"/>
    <property type="match status" value="1"/>
</dbReference>
<dbReference type="Gene3D" id="1.20.5.50">
    <property type="match status" value="1"/>
</dbReference>
<dbReference type="Gene3D" id="3.30.160.880">
    <property type="entry name" value="Cell division protein ZapA protomer, N-terminal domain"/>
    <property type="match status" value="1"/>
</dbReference>
<dbReference type="HAMAP" id="MF_02012">
    <property type="entry name" value="ZapA_type1"/>
    <property type="match status" value="1"/>
</dbReference>
<dbReference type="InterPro" id="IPR007838">
    <property type="entry name" value="Cell_div_ZapA-like"/>
</dbReference>
<dbReference type="InterPro" id="IPR036192">
    <property type="entry name" value="Cell_div_ZapA-like_sf"/>
</dbReference>
<dbReference type="InterPro" id="IPR023771">
    <property type="entry name" value="Cell_div_ZapA_eubact"/>
</dbReference>
<dbReference type="InterPro" id="IPR042233">
    <property type="entry name" value="Cell_div_ZapA_N"/>
</dbReference>
<dbReference type="NCBIfam" id="NF008209">
    <property type="entry name" value="PRK10972.1"/>
    <property type="match status" value="1"/>
</dbReference>
<dbReference type="PANTHER" id="PTHR34981">
    <property type="entry name" value="CELL DIVISION PROTEIN ZAPA"/>
    <property type="match status" value="1"/>
</dbReference>
<dbReference type="PANTHER" id="PTHR34981:SF1">
    <property type="entry name" value="CELL DIVISION PROTEIN ZAPA"/>
    <property type="match status" value="1"/>
</dbReference>
<dbReference type="Pfam" id="PF05164">
    <property type="entry name" value="ZapA"/>
    <property type="match status" value="1"/>
</dbReference>
<dbReference type="SUPFAM" id="SSF102829">
    <property type="entry name" value="Cell division protein ZapA-like"/>
    <property type="match status" value="1"/>
</dbReference>
<reference key="1">
    <citation type="journal article" date="2001" name="Nature">
        <title>Genome sequence of enterohaemorrhagic Escherichia coli O157:H7.</title>
        <authorList>
            <person name="Perna N.T."/>
            <person name="Plunkett G. III"/>
            <person name="Burland V."/>
            <person name="Mau B."/>
            <person name="Glasner J.D."/>
            <person name="Rose D.J."/>
            <person name="Mayhew G.F."/>
            <person name="Evans P.S."/>
            <person name="Gregor J."/>
            <person name="Kirkpatrick H.A."/>
            <person name="Posfai G."/>
            <person name="Hackett J."/>
            <person name="Klink S."/>
            <person name="Boutin A."/>
            <person name="Shao Y."/>
            <person name="Miller L."/>
            <person name="Grotbeck E.J."/>
            <person name="Davis N.W."/>
            <person name="Lim A."/>
            <person name="Dimalanta E.T."/>
            <person name="Potamousis K."/>
            <person name="Apodaca J."/>
            <person name="Anantharaman T.S."/>
            <person name="Lin J."/>
            <person name="Yen G."/>
            <person name="Schwartz D.C."/>
            <person name="Welch R.A."/>
            <person name="Blattner F.R."/>
        </authorList>
    </citation>
    <scope>NUCLEOTIDE SEQUENCE [LARGE SCALE GENOMIC DNA]</scope>
    <source>
        <strain>O157:H7 / EDL933 / ATCC 700927 / EHEC</strain>
    </source>
</reference>
<reference key="2">
    <citation type="journal article" date="2001" name="DNA Res.">
        <title>Complete genome sequence of enterohemorrhagic Escherichia coli O157:H7 and genomic comparison with a laboratory strain K-12.</title>
        <authorList>
            <person name="Hayashi T."/>
            <person name="Makino K."/>
            <person name="Ohnishi M."/>
            <person name="Kurokawa K."/>
            <person name="Ishii K."/>
            <person name="Yokoyama K."/>
            <person name="Han C.-G."/>
            <person name="Ohtsubo E."/>
            <person name="Nakayama K."/>
            <person name="Murata T."/>
            <person name="Tanaka M."/>
            <person name="Tobe T."/>
            <person name="Iida T."/>
            <person name="Takami H."/>
            <person name="Honda T."/>
            <person name="Sasakawa C."/>
            <person name="Ogasawara N."/>
            <person name="Yasunaga T."/>
            <person name="Kuhara S."/>
            <person name="Shiba T."/>
            <person name="Hattori M."/>
            <person name="Shinagawa H."/>
        </authorList>
    </citation>
    <scope>NUCLEOTIDE SEQUENCE [LARGE SCALE GENOMIC DNA]</scope>
    <source>
        <strain>O157:H7 / Sakai / RIMD 0509952 / EHEC</strain>
    </source>
</reference>
<keyword id="KW-0131">Cell cycle</keyword>
<keyword id="KW-0132">Cell division</keyword>
<keyword id="KW-0175">Coiled coil</keyword>
<keyword id="KW-0963">Cytoplasm</keyword>
<keyword id="KW-1185">Reference proteome</keyword>
<keyword id="KW-0717">Septation</keyword>
<sequence length="109" mass="12594">MSAQPVDIQIFGRSLRVNCPPDQRDALNQAADDLNQRLQDLKERTRVTNTEQLVFIAALNISYELAQEKAKTRDYAASMEQRIRMLQQTIEQALLEQGRITEKTNQNFE</sequence>
<proteinExistence type="inferred from homology"/>
<protein>
    <recommendedName>
        <fullName evidence="1">Cell division protein ZapA</fullName>
    </recommendedName>
    <alternativeName>
        <fullName evidence="1">Z ring-associated protein ZapA</fullName>
    </alternativeName>
</protein>
<comment type="function">
    <text evidence="1">Activator of cell division through the inhibition of FtsZ GTPase activity, therefore promoting FtsZ assembly into bundles of protofilaments necessary for the formation of the division Z ring. It is recruited early at mid-cell but it is not essential for cell division.</text>
</comment>
<comment type="subunit">
    <text evidence="1">Homodimer. Interacts with FtsZ.</text>
</comment>
<comment type="subcellular location">
    <subcellularLocation>
        <location evidence="1">Cytoplasm</location>
    </subcellularLocation>
    <text evidence="1">Localizes at mid-cell.</text>
</comment>
<comment type="similarity">
    <text evidence="1">Belongs to the ZapA family. Type 1 subfamily.</text>
</comment>
<evidence type="ECO:0000255" key="1">
    <source>
        <dbReference type="HAMAP-Rule" id="MF_02012"/>
    </source>
</evidence>